<protein>
    <recommendedName>
        <fullName evidence="1">NADH-quinone oxidoreductase subunit B</fullName>
        <ecNumber evidence="1">7.1.1.-</ecNumber>
    </recommendedName>
    <alternativeName>
        <fullName evidence="1">NADH dehydrogenase I subunit B</fullName>
    </alternativeName>
    <alternativeName>
        <fullName evidence="1">NDH-1 subunit B</fullName>
    </alternativeName>
</protein>
<reference key="1">
    <citation type="submission" date="2006-03" db="EMBL/GenBank/DDBJ databases">
        <title>Complete sequence of chromosome of Nitrobacter hamburgensis X14.</title>
        <authorList>
            <consortium name="US DOE Joint Genome Institute"/>
            <person name="Copeland A."/>
            <person name="Lucas S."/>
            <person name="Lapidus A."/>
            <person name="Barry K."/>
            <person name="Detter J.C."/>
            <person name="Glavina del Rio T."/>
            <person name="Hammon N."/>
            <person name="Israni S."/>
            <person name="Dalin E."/>
            <person name="Tice H."/>
            <person name="Pitluck S."/>
            <person name="Chain P."/>
            <person name="Malfatti S."/>
            <person name="Shin M."/>
            <person name="Vergez L."/>
            <person name="Schmutz J."/>
            <person name="Larimer F."/>
            <person name="Land M."/>
            <person name="Hauser L."/>
            <person name="Kyrpides N."/>
            <person name="Ivanova N."/>
            <person name="Ward B."/>
            <person name="Arp D."/>
            <person name="Klotz M."/>
            <person name="Stein L."/>
            <person name="O'Mullan G."/>
            <person name="Starkenburg S."/>
            <person name="Sayavedra L."/>
            <person name="Poret-Peterson A.T."/>
            <person name="Gentry M.E."/>
            <person name="Bruce D."/>
            <person name="Richardson P."/>
        </authorList>
    </citation>
    <scope>NUCLEOTIDE SEQUENCE [LARGE SCALE GENOMIC DNA]</scope>
    <source>
        <strain>DSM 10229 / NCIMB 13809 / X14</strain>
    </source>
</reference>
<feature type="chain" id="PRO_5000117736" description="NADH-quinone oxidoreductase subunit B">
    <location>
        <begin position="1"/>
        <end position="202"/>
    </location>
</feature>
<feature type="region of interest" description="Disordered" evidence="2">
    <location>
        <begin position="1"/>
        <end position="32"/>
    </location>
</feature>
<feature type="compositionally biased region" description="Polar residues" evidence="2">
    <location>
        <begin position="1"/>
        <end position="13"/>
    </location>
</feature>
<feature type="binding site" evidence="1">
    <location>
        <position position="81"/>
    </location>
    <ligand>
        <name>[4Fe-4S] cluster</name>
        <dbReference type="ChEBI" id="CHEBI:49883"/>
    </ligand>
</feature>
<feature type="binding site" evidence="1">
    <location>
        <position position="82"/>
    </location>
    <ligand>
        <name>[4Fe-4S] cluster</name>
        <dbReference type="ChEBI" id="CHEBI:49883"/>
    </ligand>
</feature>
<feature type="binding site" evidence="1">
    <location>
        <position position="146"/>
    </location>
    <ligand>
        <name>[4Fe-4S] cluster</name>
        <dbReference type="ChEBI" id="CHEBI:49883"/>
    </ligand>
</feature>
<feature type="binding site" evidence="1">
    <location>
        <position position="176"/>
    </location>
    <ligand>
        <name>[4Fe-4S] cluster</name>
        <dbReference type="ChEBI" id="CHEBI:49883"/>
    </ligand>
</feature>
<name>NUOB_NITHX</name>
<keyword id="KW-0004">4Fe-4S</keyword>
<keyword id="KW-0997">Cell inner membrane</keyword>
<keyword id="KW-1003">Cell membrane</keyword>
<keyword id="KW-0408">Iron</keyword>
<keyword id="KW-0411">Iron-sulfur</keyword>
<keyword id="KW-0472">Membrane</keyword>
<keyword id="KW-0479">Metal-binding</keyword>
<keyword id="KW-0520">NAD</keyword>
<keyword id="KW-0874">Quinone</keyword>
<keyword id="KW-1185">Reference proteome</keyword>
<keyword id="KW-1278">Translocase</keyword>
<keyword id="KW-0813">Transport</keyword>
<keyword id="KW-0830">Ubiquinone</keyword>
<organism>
    <name type="scientific">Nitrobacter hamburgensis (strain DSM 10229 / NCIMB 13809 / X14)</name>
    <dbReference type="NCBI Taxonomy" id="323097"/>
    <lineage>
        <taxon>Bacteria</taxon>
        <taxon>Pseudomonadati</taxon>
        <taxon>Pseudomonadota</taxon>
        <taxon>Alphaproteobacteria</taxon>
        <taxon>Hyphomicrobiales</taxon>
        <taxon>Nitrobacteraceae</taxon>
        <taxon>Nitrobacter</taxon>
    </lineage>
</organism>
<sequence length="202" mass="21988">MSSPTTKFSNAASSAGGPRVTPAAASILDPRTGRPVGAGDPYFLEVNHELSDKGFFVAATDDLITWARTGSLMWMTFGLACCAVEMMQVSMPRYDVERFGFAPRASPRQSDVMIVAGTLTNKMAPALRKVYDQMPEPRYVISMGSCANGGGYYHYSYSVVRGCDRIVPIDVYVPGCPPTAEALLYGILLLQKKIRRTGTIER</sequence>
<evidence type="ECO:0000255" key="1">
    <source>
        <dbReference type="HAMAP-Rule" id="MF_01356"/>
    </source>
</evidence>
<evidence type="ECO:0000256" key="2">
    <source>
        <dbReference type="SAM" id="MobiDB-lite"/>
    </source>
</evidence>
<proteinExistence type="inferred from homology"/>
<gene>
    <name evidence="1" type="primary">nuoB</name>
    <name type="ordered locus">Nham_2220</name>
</gene>
<comment type="function">
    <text evidence="1">NDH-1 shuttles electrons from NADH, via FMN and iron-sulfur (Fe-S) centers, to quinones in the respiratory chain. The immediate electron acceptor for the enzyme in this species is believed to be ubiquinone. Couples the redox reaction to proton translocation (for every two electrons transferred, four hydrogen ions are translocated across the cytoplasmic membrane), and thus conserves the redox energy in a proton gradient.</text>
</comment>
<comment type="catalytic activity">
    <reaction evidence="1">
        <text>a quinone + NADH + 5 H(+)(in) = a quinol + NAD(+) + 4 H(+)(out)</text>
        <dbReference type="Rhea" id="RHEA:57888"/>
        <dbReference type="ChEBI" id="CHEBI:15378"/>
        <dbReference type="ChEBI" id="CHEBI:24646"/>
        <dbReference type="ChEBI" id="CHEBI:57540"/>
        <dbReference type="ChEBI" id="CHEBI:57945"/>
        <dbReference type="ChEBI" id="CHEBI:132124"/>
    </reaction>
</comment>
<comment type="cofactor">
    <cofactor evidence="1">
        <name>[4Fe-4S] cluster</name>
        <dbReference type="ChEBI" id="CHEBI:49883"/>
    </cofactor>
    <text evidence="1">Binds 1 [4Fe-4S] cluster.</text>
</comment>
<comment type="subunit">
    <text evidence="1">NDH-1 is composed of 14 different subunits. Subunits NuoB, C, D, E, F, and G constitute the peripheral sector of the complex.</text>
</comment>
<comment type="subcellular location">
    <subcellularLocation>
        <location evidence="1">Cell inner membrane</location>
        <topology evidence="1">Peripheral membrane protein</topology>
        <orientation evidence="1">Cytoplasmic side</orientation>
    </subcellularLocation>
</comment>
<comment type="similarity">
    <text evidence="1">Belongs to the complex I 20 kDa subunit family.</text>
</comment>
<dbReference type="EC" id="7.1.1.-" evidence="1"/>
<dbReference type="EMBL" id="CP000319">
    <property type="protein sequence ID" value="ABE63012.1"/>
    <property type="molecule type" value="Genomic_DNA"/>
</dbReference>
<dbReference type="SMR" id="Q1QL85"/>
<dbReference type="STRING" id="323097.Nham_2220"/>
<dbReference type="KEGG" id="nha:Nham_2220"/>
<dbReference type="eggNOG" id="COG0377">
    <property type="taxonomic scope" value="Bacteria"/>
</dbReference>
<dbReference type="HOGENOM" id="CLU_055737_7_0_5"/>
<dbReference type="Proteomes" id="UP000001953">
    <property type="component" value="Chromosome"/>
</dbReference>
<dbReference type="GO" id="GO:0005886">
    <property type="term" value="C:plasma membrane"/>
    <property type="evidence" value="ECO:0007669"/>
    <property type="project" value="UniProtKB-SubCell"/>
</dbReference>
<dbReference type="GO" id="GO:0045271">
    <property type="term" value="C:respiratory chain complex I"/>
    <property type="evidence" value="ECO:0007669"/>
    <property type="project" value="TreeGrafter"/>
</dbReference>
<dbReference type="GO" id="GO:0051539">
    <property type="term" value="F:4 iron, 4 sulfur cluster binding"/>
    <property type="evidence" value="ECO:0007669"/>
    <property type="project" value="UniProtKB-KW"/>
</dbReference>
<dbReference type="GO" id="GO:0005506">
    <property type="term" value="F:iron ion binding"/>
    <property type="evidence" value="ECO:0007669"/>
    <property type="project" value="UniProtKB-UniRule"/>
</dbReference>
<dbReference type="GO" id="GO:0008137">
    <property type="term" value="F:NADH dehydrogenase (ubiquinone) activity"/>
    <property type="evidence" value="ECO:0007669"/>
    <property type="project" value="InterPro"/>
</dbReference>
<dbReference type="GO" id="GO:0050136">
    <property type="term" value="F:NADH:ubiquinone reductase (non-electrogenic) activity"/>
    <property type="evidence" value="ECO:0007669"/>
    <property type="project" value="UniProtKB-UniRule"/>
</dbReference>
<dbReference type="GO" id="GO:0048038">
    <property type="term" value="F:quinone binding"/>
    <property type="evidence" value="ECO:0007669"/>
    <property type="project" value="UniProtKB-KW"/>
</dbReference>
<dbReference type="GO" id="GO:0009060">
    <property type="term" value="P:aerobic respiration"/>
    <property type="evidence" value="ECO:0007669"/>
    <property type="project" value="TreeGrafter"/>
</dbReference>
<dbReference type="GO" id="GO:0015990">
    <property type="term" value="P:electron transport coupled proton transport"/>
    <property type="evidence" value="ECO:0007669"/>
    <property type="project" value="TreeGrafter"/>
</dbReference>
<dbReference type="FunFam" id="3.40.50.12280:FF:000001">
    <property type="entry name" value="NADH-quinone oxidoreductase subunit B 2"/>
    <property type="match status" value="1"/>
</dbReference>
<dbReference type="Gene3D" id="3.40.50.12280">
    <property type="match status" value="1"/>
</dbReference>
<dbReference type="HAMAP" id="MF_01356">
    <property type="entry name" value="NDH1_NuoB"/>
    <property type="match status" value="1"/>
</dbReference>
<dbReference type="InterPro" id="IPR006137">
    <property type="entry name" value="NADH_UbQ_OxRdtase-like_20kDa"/>
</dbReference>
<dbReference type="InterPro" id="IPR006138">
    <property type="entry name" value="NADH_UQ_OxRdtase_20Kd_su"/>
</dbReference>
<dbReference type="NCBIfam" id="TIGR01957">
    <property type="entry name" value="nuoB_fam"/>
    <property type="match status" value="1"/>
</dbReference>
<dbReference type="NCBIfam" id="NF005012">
    <property type="entry name" value="PRK06411.1"/>
    <property type="match status" value="1"/>
</dbReference>
<dbReference type="PANTHER" id="PTHR11995">
    <property type="entry name" value="NADH DEHYDROGENASE"/>
    <property type="match status" value="1"/>
</dbReference>
<dbReference type="PANTHER" id="PTHR11995:SF14">
    <property type="entry name" value="NADH DEHYDROGENASE [UBIQUINONE] IRON-SULFUR PROTEIN 7, MITOCHONDRIAL"/>
    <property type="match status" value="1"/>
</dbReference>
<dbReference type="Pfam" id="PF01058">
    <property type="entry name" value="Oxidored_q6"/>
    <property type="match status" value="1"/>
</dbReference>
<dbReference type="SUPFAM" id="SSF56770">
    <property type="entry name" value="HydA/Nqo6-like"/>
    <property type="match status" value="1"/>
</dbReference>
<dbReference type="PROSITE" id="PS01150">
    <property type="entry name" value="COMPLEX1_20K"/>
    <property type="match status" value="1"/>
</dbReference>
<accession>Q1QL85</accession>